<reference key="1">
    <citation type="journal article" date="1998" name="Science">
        <title>Complete genome sequence of Treponema pallidum, the syphilis spirochete.</title>
        <authorList>
            <person name="Fraser C.M."/>
            <person name="Norris S.J."/>
            <person name="Weinstock G.M."/>
            <person name="White O."/>
            <person name="Sutton G.G."/>
            <person name="Dodson R.J."/>
            <person name="Gwinn M.L."/>
            <person name="Hickey E.K."/>
            <person name="Clayton R.A."/>
            <person name="Ketchum K.A."/>
            <person name="Sodergren E."/>
            <person name="Hardham J.M."/>
            <person name="McLeod M.P."/>
            <person name="Salzberg S.L."/>
            <person name="Peterson J.D."/>
            <person name="Khalak H.G."/>
            <person name="Richardson D.L."/>
            <person name="Howell J.K."/>
            <person name="Chidambaram M."/>
            <person name="Utterback T.R."/>
            <person name="McDonald L.A."/>
            <person name="Artiach P."/>
            <person name="Bowman C."/>
            <person name="Cotton M.D."/>
            <person name="Fujii C."/>
            <person name="Garland S.A."/>
            <person name="Hatch B."/>
            <person name="Horst K."/>
            <person name="Roberts K.M."/>
            <person name="Sandusky M."/>
            <person name="Weidman J.F."/>
            <person name="Smith H.O."/>
            <person name="Venter J.C."/>
        </authorList>
    </citation>
    <scope>NUCLEOTIDE SEQUENCE [LARGE SCALE GENOMIC DNA]</scope>
    <source>
        <strain>Nichols</strain>
    </source>
</reference>
<evidence type="ECO:0000255" key="1">
    <source>
        <dbReference type="HAMAP-Rule" id="MF_00182"/>
    </source>
</evidence>
<evidence type="ECO:0000305" key="2"/>
<dbReference type="EC" id="2.1.2.9" evidence="1"/>
<dbReference type="EMBL" id="AE000520">
    <property type="protein sequence ID" value="AAC65723.1"/>
    <property type="molecule type" value="Genomic_DNA"/>
</dbReference>
<dbReference type="PIR" id="G71284">
    <property type="entry name" value="G71284"/>
</dbReference>
<dbReference type="RefSeq" id="WP_010882201.1">
    <property type="nucleotide sequence ID" value="NC_021490.2"/>
</dbReference>
<dbReference type="SMR" id="O83737"/>
<dbReference type="IntAct" id="O83737">
    <property type="interactions" value="16"/>
</dbReference>
<dbReference type="STRING" id="243276.TP_0756"/>
<dbReference type="EnsemblBacteria" id="AAC65723">
    <property type="protein sequence ID" value="AAC65723"/>
    <property type="gene ID" value="TP_0756"/>
</dbReference>
<dbReference type="GeneID" id="93876523"/>
<dbReference type="KEGG" id="tpa:TP_0756"/>
<dbReference type="KEGG" id="tpw:TPANIC_0756"/>
<dbReference type="eggNOG" id="COG0223">
    <property type="taxonomic scope" value="Bacteria"/>
</dbReference>
<dbReference type="HOGENOM" id="CLU_033347_2_0_12"/>
<dbReference type="OrthoDB" id="9802815at2"/>
<dbReference type="Proteomes" id="UP000000811">
    <property type="component" value="Chromosome"/>
</dbReference>
<dbReference type="GO" id="GO:0005829">
    <property type="term" value="C:cytosol"/>
    <property type="evidence" value="ECO:0007669"/>
    <property type="project" value="TreeGrafter"/>
</dbReference>
<dbReference type="GO" id="GO:0004479">
    <property type="term" value="F:methionyl-tRNA formyltransferase activity"/>
    <property type="evidence" value="ECO:0007669"/>
    <property type="project" value="UniProtKB-UniRule"/>
</dbReference>
<dbReference type="CDD" id="cd08646">
    <property type="entry name" value="FMT_core_Met-tRNA-FMT_N"/>
    <property type="match status" value="1"/>
</dbReference>
<dbReference type="CDD" id="cd08704">
    <property type="entry name" value="Met_tRNA_FMT_C"/>
    <property type="match status" value="1"/>
</dbReference>
<dbReference type="Gene3D" id="3.10.25.10">
    <property type="entry name" value="Formyl transferase, C-terminal domain"/>
    <property type="match status" value="1"/>
</dbReference>
<dbReference type="Gene3D" id="3.40.50.170">
    <property type="entry name" value="Formyl transferase, N-terminal domain"/>
    <property type="match status" value="1"/>
</dbReference>
<dbReference type="HAMAP" id="MF_00182">
    <property type="entry name" value="Formyl_trans"/>
    <property type="match status" value="1"/>
</dbReference>
<dbReference type="InterPro" id="IPR005794">
    <property type="entry name" value="Fmt"/>
</dbReference>
<dbReference type="InterPro" id="IPR005793">
    <property type="entry name" value="Formyl_trans_C"/>
</dbReference>
<dbReference type="InterPro" id="IPR037022">
    <property type="entry name" value="Formyl_trans_C_sf"/>
</dbReference>
<dbReference type="InterPro" id="IPR002376">
    <property type="entry name" value="Formyl_transf_N"/>
</dbReference>
<dbReference type="InterPro" id="IPR036477">
    <property type="entry name" value="Formyl_transf_N_sf"/>
</dbReference>
<dbReference type="InterPro" id="IPR011034">
    <property type="entry name" value="Formyl_transferase-like_C_sf"/>
</dbReference>
<dbReference type="InterPro" id="IPR044135">
    <property type="entry name" value="Met-tRNA-FMT_C"/>
</dbReference>
<dbReference type="InterPro" id="IPR041711">
    <property type="entry name" value="Met-tRNA-FMT_N"/>
</dbReference>
<dbReference type="NCBIfam" id="TIGR00460">
    <property type="entry name" value="fmt"/>
    <property type="match status" value="1"/>
</dbReference>
<dbReference type="PANTHER" id="PTHR11138">
    <property type="entry name" value="METHIONYL-TRNA FORMYLTRANSFERASE"/>
    <property type="match status" value="1"/>
</dbReference>
<dbReference type="PANTHER" id="PTHR11138:SF5">
    <property type="entry name" value="METHIONYL-TRNA FORMYLTRANSFERASE, MITOCHONDRIAL"/>
    <property type="match status" value="1"/>
</dbReference>
<dbReference type="Pfam" id="PF02911">
    <property type="entry name" value="Formyl_trans_C"/>
    <property type="match status" value="1"/>
</dbReference>
<dbReference type="Pfam" id="PF00551">
    <property type="entry name" value="Formyl_trans_N"/>
    <property type="match status" value="1"/>
</dbReference>
<dbReference type="SUPFAM" id="SSF50486">
    <property type="entry name" value="FMT C-terminal domain-like"/>
    <property type="match status" value="1"/>
</dbReference>
<dbReference type="SUPFAM" id="SSF53328">
    <property type="entry name" value="Formyltransferase"/>
    <property type="match status" value="1"/>
</dbReference>
<feature type="chain" id="PRO_0000083077" description="Methionyl-tRNA formyltransferase">
    <location>
        <begin position="1"/>
        <end position="319"/>
    </location>
</feature>
<feature type="binding site" evidence="1">
    <location>
        <begin position="116"/>
        <end position="119"/>
    </location>
    <ligand>
        <name>(6S)-5,6,7,8-tetrahydrofolate</name>
        <dbReference type="ChEBI" id="CHEBI:57453"/>
    </ligand>
</feature>
<comment type="function">
    <text evidence="1">Attaches a formyl group to the free amino group of methionyl-tRNA(fMet). The formyl group appears to play a dual role in the initiator identity of N-formylmethionyl-tRNA by promoting its recognition by IF2 and preventing the misappropriation of this tRNA by the elongation apparatus.</text>
</comment>
<comment type="catalytic activity">
    <reaction evidence="1">
        <text>L-methionyl-tRNA(fMet) + (6R)-10-formyltetrahydrofolate = N-formyl-L-methionyl-tRNA(fMet) + (6S)-5,6,7,8-tetrahydrofolate + H(+)</text>
        <dbReference type="Rhea" id="RHEA:24380"/>
        <dbReference type="Rhea" id="RHEA-COMP:9952"/>
        <dbReference type="Rhea" id="RHEA-COMP:9953"/>
        <dbReference type="ChEBI" id="CHEBI:15378"/>
        <dbReference type="ChEBI" id="CHEBI:57453"/>
        <dbReference type="ChEBI" id="CHEBI:78530"/>
        <dbReference type="ChEBI" id="CHEBI:78844"/>
        <dbReference type="ChEBI" id="CHEBI:195366"/>
        <dbReference type="EC" id="2.1.2.9"/>
    </reaction>
</comment>
<comment type="similarity">
    <text evidence="1 2">Belongs to the Fmt family.</text>
</comment>
<name>FMT_TREPA</name>
<sequence length="319" mass="34261">MVRVFFAGTPECAVPSLRRVACAHRVVGVLTNPPAAVGRSGKLVHSAVAREFFRLKASGVLPESASLFVPGRLDRAFYDAVEALRPDVLVCFAYGKIFGPRFLALFPRGAINVHPSLLPRWRGSTPVPAAILAGDCETGVTLQYIGEEMDAGDILAQSRVQLDGTETTGALLSRLSLVAADLVDDVLVGVERHTLAPAAQDHSQATFCGKLCREMGLADWSNPAVVLERKIRAFTPWPGLFTYKDGERIAILQARSCESSFVPLAPVGTVLAADKNGVFVQTGDGVLSLLQLQRSGKKPLFWRDFLNGSPLLLTGRLGV</sequence>
<gene>
    <name evidence="1" type="primary">fmt</name>
    <name type="ordered locus">TP_0756</name>
</gene>
<protein>
    <recommendedName>
        <fullName evidence="1">Methionyl-tRNA formyltransferase</fullName>
        <ecNumber evidence="1">2.1.2.9</ecNumber>
    </recommendedName>
</protein>
<keyword id="KW-0648">Protein biosynthesis</keyword>
<keyword id="KW-1185">Reference proteome</keyword>
<keyword id="KW-0808">Transferase</keyword>
<organism>
    <name type="scientific">Treponema pallidum (strain Nichols)</name>
    <dbReference type="NCBI Taxonomy" id="243276"/>
    <lineage>
        <taxon>Bacteria</taxon>
        <taxon>Pseudomonadati</taxon>
        <taxon>Spirochaetota</taxon>
        <taxon>Spirochaetia</taxon>
        <taxon>Spirochaetales</taxon>
        <taxon>Treponemataceae</taxon>
        <taxon>Treponema</taxon>
    </lineage>
</organism>
<accession>O83737</accession>
<proteinExistence type="inferred from homology"/>